<dbReference type="EMBL" id="AC253576">
    <property type="status" value="NOT_ANNOTATED_CDS"/>
    <property type="molecule type" value="Genomic_DNA"/>
</dbReference>
<dbReference type="EMBL" id="BC104026">
    <property type="protein sequence ID" value="AAI04027.1"/>
    <property type="molecule type" value="mRNA"/>
</dbReference>
<dbReference type="EMBL" id="BC104027">
    <property type="protein sequence ID" value="AAI04028.1"/>
    <property type="molecule type" value="mRNA"/>
</dbReference>
<dbReference type="EMBL" id="BC104028">
    <property type="protein sequence ID" value="AAI04029.1"/>
    <property type="molecule type" value="mRNA"/>
</dbReference>
<dbReference type="EMBL" id="BC104029">
    <property type="protein sequence ID" value="AAI04030.1"/>
    <property type="molecule type" value="mRNA"/>
</dbReference>
<dbReference type="EMBL" id="BC154406">
    <property type="protein sequence ID" value="AAI54407.1"/>
    <property type="molecule type" value="mRNA"/>
</dbReference>
<dbReference type="CCDS" id="CCDS75078.1">
    <molecule id="Q3SXZ3-1"/>
</dbReference>
<dbReference type="CCDS" id="CCDS75079.1">
    <molecule id="Q3SXZ3-2"/>
</dbReference>
<dbReference type="RefSeq" id="NP_001034216.2">
    <molecule id="Q3SXZ3-1"/>
    <property type="nucleotide sequence ID" value="NM_001039127.6"/>
</dbReference>
<dbReference type="RefSeq" id="NP_001276859.1">
    <molecule id="Q3SXZ3-2"/>
    <property type="nucleotide sequence ID" value="NM_001289930.2"/>
</dbReference>
<dbReference type="RefSeq" id="NP_001276860.1">
    <molecule id="Q3SXZ3-2"/>
    <property type="nucleotide sequence ID" value="NM_001289931.2"/>
</dbReference>
<dbReference type="RefSeq" id="XP_016863468.1">
    <property type="nucleotide sequence ID" value="XM_017007979.1"/>
</dbReference>
<dbReference type="RefSeq" id="XP_016863469.1">
    <molecule id="Q3SXZ3-2"/>
    <property type="nucleotide sequence ID" value="XM_017007980.3"/>
</dbReference>
<dbReference type="SMR" id="Q3SXZ3"/>
<dbReference type="BioGRID" id="129101">
    <property type="interactions" value="14"/>
</dbReference>
<dbReference type="FunCoup" id="Q3SXZ3">
    <property type="interactions" value="11"/>
</dbReference>
<dbReference type="IntAct" id="Q3SXZ3">
    <property type="interactions" value="10"/>
</dbReference>
<dbReference type="STRING" id="9606.ENSP00000480556"/>
<dbReference type="GlyGen" id="Q3SXZ3">
    <property type="glycosylation" value="2 sites, 1 O-linked glycan (2 sites)"/>
</dbReference>
<dbReference type="iPTMnet" id="Q3SXZ3"/>
<dbReference type="PhosphoSitePlus" id="Q3SXZ3"/>
<dbReference type="BioMuta" id="ZNF718"/>
<dbReference type="DMDM" id="94730683"/>
<dbReference type="jPOST" id="Q3SXZ3"/>
<dbReference type="MassIVE" id="Q3SXZ3"/>
<dbReference type="PaxDb" id="9606-ENSP00000480556"/>
<dbReference type="PeptideAtlas" id="Q3SXZ3"/>
<dbReference type="ProteomicsDB" id="61826">
    <molecule id="Q3SXZ3-1"/>
</dbReference>
<dbReference type="ProteomicsDB" id="61827">
    <molecule id="Q3SXZ3-2"/>
</dbReference>
<dbReference type="Antibodypedia" id="73438">
    <property type="antibodies" value="26 antibodies from 8 providers"/>
</dbReference>
<dbReference type="DNASU" id="255403"/>
<dbReference type="Ensembl" id="ENST00000510175.6">
    <molecule id="Q3SXZ3-1"/>
    <property type="protein sequence ID" value="ENSP00000480556.1"/>
    <property type="gene ID" value="ENSG00000250312.8"/>
</dbReference>
<dbReference type="Ensembl" id="ENST00000609714.1">
    <molecule id="Q3SXZ3-2"/>
    <property type="protein sequence ID" value="ENSP00000476435.1"/>
    <property type="gene ID" value="ENSG00000250312.8"/>
</dbReference>
<dbReference type="GeneID" id="255403"/>
<dbReference type="KEGG" id="hsa:255403"/>
<dbReference type="MANE-Select" id="ENST00000510175.6">
    <property type="protein sequence ID" value="ENSP00000480556.1"/>
    <property type="RefSeq nucleotide sequence ID" value="NM_001039127.6"/>
    <property type="RefSeq protein sequence ID" value="NP_001034216.2"/>
</dbReference>
<dbReference type="UCSC" id="uc032tae.2">
    <property type="organism name" value="human"/>
</dbReference>
<dbReference type="AGR" id="HGNC:26889"/>
<dbReference type="CTD" id="255403"/>
<dbReference type="DisGeNET" id="255403"/>
<dbReference type="GeneCards" id="ZNF718"/>
<dbReference type="HGNC" id="HGNC:26889">
    <property type="gene designation" value="ZNF718"/>
</dbReference>
<dbReference type="HPA" id="ENSG00000250312">
    <property type="expression patterns" value="Low tissue specificity"/>
</dbReference>
<dbReference type="MIM" id="618405">
    <property type="type" value="gene"/>
</dbReference>
<dbReference type="neXtProt" id="NX_Q3SXZ3"/>
<dbReference type="OpenTargets" id="ENSG00000250312"/>
<dbReference type="PharmGKB" id="PA143485682"/>
<dbReference type="VEuPathDB" id="HostDB:ENSG00000250312"/>
<dbReference type="eggNOG" id="KOG1721">
    <property type="taxonomic scope" value="Eukaryota"/>
</dbReference>
<dbReference type="GeneTree" id="ENSGT00940000161765"/>
<dbReference type="InParanoid" id="Q3SXZ3"/>
<dbReference type="OMA" id="CISKECC"/>
<dbReference type="OrthoDB" id="6077919at2759"/>
<dbReference type="PAN-GO" id="Q3SXZ3">
    <property type="GO annotations" value="3 GO annotations based on evolutionary models"/>
</dbReference>
<dbReference type="PhylomeDB" id="Q3SXZ3"/>
<dbReference type="PathwayCommons" id="Q3SXZ3"/>
<dbReference type="Reactome" id="R-HSA-212436">
    <property type="pathway name" value="Generic Transcription Pathway"/>
</dbReference>
<dbReference type="SignaLink" id="Q3SXZ3"/>
<dbReference type="BioGRID-ORCS" id="255403">
    <property type="hits" value="4 hits in 178 CRISPR screens"/>
</dbReference>
<dbReference type="ChiTaRS" id="ZNF718">
    <property type="organism name" value="human"/>
</dbReference>
<dbReference type="GenomeRNAi" id="255403"/>
<dbReference type="Pharos" id="Q3SXZ3">
    <property type="development level" value="Tdark"/>
</dbReference>
<dbReference type="PRO" id="PR:Q3SXZ3"/>
<dbReference type="Proteomes" id="UP000005640">
    <property type="component" value="Chromosome 4"/>
</dbReference>
<dbReference type="RNAct" id="Q3SXZ3">
    <property type="molecule type" value="protein"/>
</dbReference>
<dbReference type="Bgee" id="ENSG00000250312">
    <property type="expression patterns" value="Expressed in male germ line stem cell (sensu Vertebrata) in testis and 118 other cell types or tissues"/>
</dbReference>
<dbReference type="ExpressionAtlas" id="Q3SXZ3">
    <property type="expression patterns" value="baseline and differential"/>
</dbReference>
<dbReference type="GO" id="GO:0005634">
    <property type="term" value="C:nucleus"/>
    <property type="evidence" value="ECO:0007669"/>
    <property type="project" value="UniProtKB-SubCell"/>
</dbReference>
<dbReference type="GO" id="GO:0000981">
    <property type="term" value="F:DNA-binding transcription factor activity, RNA polymerase II-specific"/>
    <property type="evidence" value="ECO:0000318"/>
    <property type="project" value="GO_Central"/>
</dbReference>
<dbReference type="GO" id="GO:0000978">
    <property type="term" value="F:RNA polymerase II cis-regulatory region sequence-specific DNA binding"/>
    <property type="evidence" value="ECO:0000318"/>
    <property type="project" value="GO_Central"/>
</dbReference>
<dbReference type="GO" id="GO:0008270">
    <property type="term" value="F:zinc ion binding"/>
    <property type="evidence" value="ECO:0007669"/>
    <property type="project" value="UniProtKB-KW"/>
</dbReference>
<dbReference type="GO" id="GO:0006355">
    <property type="term" value="P:regulation of DNA-templated transcription"/>
    <property type="evidence" value="ECO:0000318"/>
    <property type="project" value="GO_Central"/>
</dbReference>
<dbReference type="CDD" id="cd07765">
    <property type="entry name" value="KRAB_A-box"/>
    <property type="match status" value="1"/>
</dbReference>
<dbReference type="FunFam" id="3.30.160.60:FF:000557">
    <property type="entry name" value="zinc finger and SCAN domain-containing protein 29"/>
    <property type="match status" value="1"/>
</dbReference>
<dbReference type="FunFam" id="3.30.160.60:FF:001737">
    <property type="entry name" value="Zinc finger protein 100"/>
    <property type="match status" value="1"/>
</dbReference>
<dbReference type="FunFam" id="3.30.160.60:FF:000524">
    <property type="entry name" value="Zinc finger protein 155"/>
    <property type="match status" value="1"/>
</dbReference>
<dbReference type="FunFam" id="3.30.160.60:FF:000004">
    <property type="entry name" value="zinc finger protein 184 isoform X1"/>
    <property type="match status" value="1"/>
</dbReference>
<dbReference type="FunFam" id="3.30.160.60:FF:000034">
    <property type="entry name" value="zinc finger protein 25"/>
    <property type="match status" value="3"/>
</dbReference>
<dbReference type="FunFam" id="3.30.160.60:FF:000087">
    <property type="entry name" value="Zinc finger protein 354B"/>
    <property type="match status" value="1"/>
</dbReference>
<dbReference type="FunFam" id="3.30.160.60:FF:000690">
    <property type="entry name" value="Zinc finger protein 354C"/>
    <property type="match status" value="1"/>
</dbReference>
<dbReference type="FunFam" id="3.30.160.60:FF:000895">
    <property type="entry name" value="Zinc finger protein 597"/>
    <property type="match status" value="1"/>
</dbReference>
<dbReference type="FunFam" id="3.30.160.60:FF:000362">
    <property type="entry name" value="Zinc finger protein 606"/>
    <property type="match status" value="1"/>
</dbReference>
<dbReference type="Gene3D" id="6.10.140.140">
    <property type="match status" value="1"/>
</dbReference>
<dbReference type="Gene3D" id="3.30.160.60">
    <property type="entry name" value="Classic Zinc Finger"/>
    <property type="match status" value="11"/>
</dbReference>
<dbReference type="InterPro" id="IPR001909">
    <property type="entry name" value="KRAB"/>
</dbReference>
<dbReference type="InterPro" id="IPR036051">
    <property type="entry name" value="KRAB_dom_sf"/>
</dbReference>
<dbReference type="InterPro" id="IPR036236">
    <property type="entry name" value="Znf_C2H2_sf"/>
</dbReference>
<dbReference type="InterPro" id="IPR013087">
    <property type="entry name" value="Znf_C2H2_type"/>
</dbReference>
<dbReference type="PANTHER" id="PTHR23235:SF178">
    <property type="entry name" value="C2H2-TYPE DOMAIN-CONTAINING PROTEIN-RELATED"/>
    <property type="match status" value="1"/>
</dbReference>
<dbReference type="PANTHER" id="PTHR23235">
    <property type="entry name" value="KRUEPPEL-LIKE TRANSCRIPTION FACTOR"/>
    <property type="match status" value="1"/>
</dbReference>
<dbReference type="Pfam" id="PF01352">
    <property type="entry name" value="KRAB"/>
    <property type="match status" value="1"/>
</dbReference>
<dbReference type="Pfam" id="PF00096">
    <property type="entry name" value="zf-C2H2"/>
    <property type="match status" value="11"/>
</dbReference>
<dbReference type="SMART" id="SM00349">
    <property type="entry name" value="KRAB"/>
    <property type="match status" value="1"/>
</dbReference>
<dbReference type="SMART" id="SM00355">
    <property type="entry name" value="ZnF_C2H2"/>
    <property type="match status" value="11"/>
</dbReference>
<dbReference type="SUPFAM" id="SSF57667">
    <property type="entry name" value="beta-beta-alpha zinc fingers"/>
    <property type="match status" value="6"/>
</dbReference>
<dbReference type="SUPFAM" id="SSF109640">
    <property type="entry name" value="KRAB domain (Kruppel-associated box)"/>
    <property type="match status" value="1"/>
</dbReference>
<dbReference type="PROSITE" id="PS50805">
    <property type="entry name" value="KRAB"/>
    <property type="match status" value="1"/>
</dbReference>
<dbReference type="PROSITE" id="PS00028">
    <property type="entry name" value="ZINC_FINGER_C2H2_1"/>
    <property type="match status" value="11"/>
</dbReference>
<dbReference type="PROSITE" id="PS50157">
    <property type="entry name" value="ZINC_FINGER_C2H2_2"/>
    <property type="match status" value="11"/>
</dbReference>
<name>ZN718_HUMAN</name>
<gene>
    <name type="primary">ZNF718</name>
</gene>
<proteinExistence type="evidence at protein level"/>
<evidence type="ECO:0000255" key="1">
    <source>
        <dbReference type="PROSITE-ProRule" id="PRU00042"/>
    </source>
</evidence>
<evidence type="ECO:0000255" key="2">
    <source>
        <dbReference type="PROSITE-ProRule" id="PRU00119"/>
    </source>
</evidence>
<evidence type="ECO:0000269" key="3">
    <source>
    </source>
</evidence>
<evidence type="ECO:0000303" key="4">
    <source>
    </source>
</evidence>
<evidence type="ECO:0000305" key="5"/>
<evidence type="ECO:0000312" key="6">
    <source>
        <dbReference type="Proteomes" id="UP000005640"/>
    </source>
</evidence>
<feature type="chain" id="PRO_0000233286" description="Zinc finger protein 718">
    <location>
        <begin position="1"/>
        <end position="478"/>
    </location>
</feature>
<feature type="domain" description="KRAB" evidence="2">
    <location>
        <begin position="4"/>
        <end position="75"/>
    </location>
</feature>
<feature type="zinc finger region" description="C2H2-type 1" evidence="1">
    <location>
        <begin position="171"/>
        <end position="193"/>
    </location>
</feature>
<feature type="zinc finger region" description="C2H2-type 2" evidence="1">
    <location>
        <begin position="199"/>
        <end position="221"/>
    </location>
</feature>
<feature type="zinc finger region" description="C2H2-type 3" evidence="1">
    <location>
        <begin position="227"/>
        <end position="249"/>
    </location>
</feature>
<feature type="zinc finger region" description="C2H2-type 4" evidence="1">
    <location>
        <begin position="255"/>
        <end position="277"/>
    </location>
</feature>
<feature type="zinc finger region" description="C2H2-type 5" evidence="1">
    <location>
        <begin position="283"/>
        <end position="305"/>
    </location>
</feature>
<feature type="zinc finger region" description="C2H2-type 6" evidence="1">
    <location>
        <begin position="311"/>
        <end position="333"/>
    </location>
</feature>
<feature type="zinc finger region" description="C2H2-type 7" evidence="1">
    <location>
        <begin position="339"/>
        <end position="361"/>
    </location>
</feature>
<feature type="zinc finger region" description="C2H2-type 8" evidence="1">
    <location>
        <begin position="367"/>
        <end position="389"/>
    </location>
</feature>
<feature type="zinc finger region" description="C2H2-type 9" evidence="1">
    <location>
        <begin position="395"/>
        <end position="417"/>
    </location>
</feature>
<feature type="zinc finger region" description="C2H2-type 10" evidence="1">
    <location>
        <begin position="423"/>
        <end position="445"/>
    </location>
</feature>
<feature type="zinc finger region" description="C2H2-type 11" evidence="1">
    <location>
        <begin position="451"/>
        <end position="473"/>
    </location>
</feature>
<feature type="splice variant" id="VSP_018110" description="In isoform 2." evidence="4">
    <location>
        <begin position="1"/>
        <end position="32"/>
    </location>
</feature>
<feature type="sequence variant" id="VAR_059933" description="In dbSNP:rs9684215.">
    <original>K</original>
    <variation>N</variation>
    <location>
        <position position="140"/>
    </location>
</feature>
<feature type="sequence variant" id="VAR_059934" description="In dbSNP:rs9684214.">
    <original>K</original>
    <variation>R</variation>
    <location>
        <position position="140"/>
    </location>
</feature>
<feature type="sequence variant" id="VAR_059935" description="In dbSNP:rs7677201.">
    <original>S</original>
    <variation>Y</variation>
    <location>
        <position position="297"/>
    </location>
</feature>
<feature type="sequence variant" id="VAR_059936" description="In dbSNP:rs7440274." evidence="3">
    <original>H</original>
    <variation>R</variation>
    <location>
        <position position="413"/>
    </location>
</feature>
<feature type="sequence conflict" description="In Ref. 2; AAI04030." evidence="5" ref="2">
    <original>T</original>
    <variation>I</variation>
    <location>
        <position position="23"/>
    </location>
</feature>
<feature type="sequence conflict" description="In Ref. 2; AAI04027/AAI04029/AAI04030." evidence="5" ref="2">
    <original>S</original>
    <variation>T</variation>
    <location>
        <position position="46"/>
    </location>
</feature>
<accession>Q3SXZ3</accession>
<accession>A0A075B7G5</accession>
<accession>A8WFQ3</accession>
<accession>Q3SXZ4</accession>
<accession>Q3SXZ5</accession>
<protein>
    <recommendedName>
        <fullName>Zinc finger protein 718</fullName>
    </recommendedName>
</protein>
<organism>
    <name type="scientific">Homo sapiens</name>
    <name type="common">Human</name>
    <dbReference type="NCBI Taxonomy" id="9606"/>
    <lineage>
        <taxon>Eukaryota</taxon>
        <taxon>Metazoa</taxon>
        <taxon>Chordata</taxon>
        <taxon>Craniata</taxon>
        <taxon>Vertebrata</taxon>
        <taxon>Euteleostomi</taxon>
        <taxon>Mammalia</taxon>
        <taxon>Eutheria</taxon>
        <taxon>Euarchontoglires</taxon>
        <taxon>Primates</taxon>
        <taxon>Haplorrhini</taxon>
        <taxon>Catarrhini</taxon>
        <taxon>Hominidae</taxon>
        <taxon>Homo</taxon>
    </lineage>
</organism>
<comment type="function">
    <text>May be involved in transcriptional regulation.</text>
</comment>
<comment type="subcellular location">
    <subcellularLocation>
        <location evidence="5">Nucleus</location>
    </subcellularLocation>
</comment>
<comment type="alternative products">
    <event type="alternative splicing"/>
    <isoform>
        <id>Q3SXZ3-1</id>
        <name>1</name>
        <sequence type="displayed"/>
    </isoform>
    <isoform>
        <id>Q3SXZ3-2</id>
        <name>2</name>
        <sequence type="described" ref="VSP_018110"/>
    </isoform>
</comment>
<reference evidence="6" key="1">
    <citation type="journal article" date="2005" name="Nature">
        <title>Generation and annotation of the DNA sequences of human chromosomes 2 and 4.</title>
        <authorList>
            <person name="Hillier L.W."/>
            <person name="Graves T.A."/>
            <person name="Fulton R.S."/>
            <person name="Fulton L.A."/>
            <person name="Pepin K.H."/>
            <person name="Minx P."/>
            <person name="Wagner-McPherson C."/>
            <person name="Layman D."/>
            <person name="Wylie K."/>
            <person name="Sekhon M."/>
            <person name="Becker M.C."/>
            <person name="Fewell G.A."/>
            <person name="Delehaunty K.D."/>
            <person name="Miner T.L."/>
            <person name="Nash W.E."/>
            <person name="Kremitzki C."/>
            <person name="Oddy L."/>
            <person name="Du H."/>
            <person name="Sun H."/>
            <person name="Bradshaw-Cordum H."/>
            <person name="Ali J."/>
            <person name="Carter J."/>
            <person name="Cordes M."/>
            <person name="Harris A."/>
            <person name="Isak A."/>
            <person name="van Brunt A."/>
            <person name="Nguyen C."/>
            <person name="Du F."/>
            <person name="Courtney L."/>
            <person name="Kalicki J."/>
            <person name="Ozersky P."/>
            <person name="Abbott S."/>
            <person name="Armstrong J."/>
            <person name="Belter E.A."/>
            <person name="Caruso L."/>
            <person name="Cedroni M."/>
            <person name="Cotton M."/>
            <person name="Davidson T."/>
            <person name="Desai A."/>
            <person name="Elliott G."/>
            <person name="Erb T."/>
            <person name="Fronick C."/>
            <person name="Gaige T."/>
            <person name="Haakenson W."/>
            <person name="Haglund K."/>
            <person name="Holmes A."/>
            <person name="Harkins R."/>
            <person name="Kim K."/>
            <person name="Kruchowski S.S."/>
            <person name="Strong C.M."/>
            <person name="Grewal N."/>
            <person name="Goyea E."/>
            <person name="Hou S."/>
            <person name="Levy A."/>
            <person name="Martinka S."/>
            <person name="Mead K."/>
            <person name="McLellan M.D."/>
            <person name="Meyer R."/>
            <person name="Randall-Maher J."/>
            <person name="Tomlinson C."/>
            <person name="Dauphin-Kohlberg S."/>
            <person name="Kozlowicz-Reilly A."/>
            <person name="Shah N."/>
            <person name="Swearengen-Shahid S."/>
            <person name="Snider J."/>
            <person name="Strong J.T."/>
            <person name="Thompson J."/>
            <person name="Yoakum M."/>
            <person name="Leonard S."/>
            <person name="Pearman C."/>
            <person name="Trani L."/>
            <person name="Radionenko M."/>
            <person name="Waligorski J.E."/>
            <person name="Wang C."/>
            <person name="Rock S.M."/>
            <person name="Tin-Wollam A.-M."/>
            <person name="Maupin R."/>
            <person name="Latreille P."/>
            <person name="Wendl M.C."/>
            <person name="Yang S.-P."/>
            <person name="Pohl C."/>
            <person name="Wallis J.W."/>
            <person name="Spieth J."/>
            <person name="Bieri T.A."/>
            <person name="Berkowicz N."/>
            <person name="Nelson J.O."/>
            <person name="Osborne J."/>
            <person name="Ding L."/>
            <person name="Meyer R."/>
            <person name="Sabo A."/>
            <person name="Shotland Y."/>
            <person name="Sinha P."/>
            <person name="Wohldmann P.E."/>
            <person name="Cook L.L."/>
            <person name="Hickenbotham M.T."/>
            <person name="Eldred J."/>
            <person name="Williams D."/>
            <person name="Jones T.A."/>
            <person name="She X."/>
            <person name="Ciccarelli F.D."/>
            <person name="Izaurralde E."/>
            <person name="Taylor J."/>
            <person name="Schmutz J."/>
            <person name="Myers R.M."/>
            <person name="Cox D.R."/>
            <person name="Huang X."/>
            <person name="McPherson J.D."/>
            <person name="Mardis E.R."/>
            <person name="Clifton S.W."/>
            <person name="Warren W.C."/>
            <person name="Chinwalla A.T."/>
            <person name="Eddy S.R."/>
            <person name="Marra M.A."/>
            <person name="Ovcharenko I."/>
            <person name="Furey T.S."/>
            <person name="Miller W."/>
            <person name="Eichler E.E."/>
            <person name="Bork P."/>
            <person name="Suyama M."/>
            <person name="Torrents D."/>
            <person name="Waterston R.H."/>
            <person name="Wilson R.K."/>
        </authorList>
    </citation>
    <scope>NUCLEOTIDE SEQUENCE [LARGE SCALE GENOMIC DNA]</scope>
</reference>
<reference key="2">
    <citation type="journal article" date="2004" name="Genome Res.">
        <title>The status, quality, and expansion of the NIH full-length cDNA project: the Mammalian Gene Collection (MGC).</title>
        <authorList>
            <consortium name="The MGC Project Team"/>
        </authorList>
    </citation>
    <scope>NUCLEOTIDE SEQUENCE [LARGE SCALE MRNA] (ISOFORMS 1 AND 2)</scope>
    <scope>VARIANT ARG-413</scope>
</reference>
<keyword id="KW-0025">Alternative splicing</keyword>
<keyword id="KW-0238">DNA-binding</keyword>
<keyword id="KW-0479">Metal-binding</keyword>
<keyword id="KW-0539">Nucleus</keyword>
<keyword id="KW-1267">Proteomics identification</keyword>
<keyword id="KW-1185">Reference proteome</keyword>
<keyword id="KW-0677">Repeat</keyword>
<keyword id="KW-0804">Transcription</keyword>
<keyword id="KW-0805">Transcription regulation</keyword>
<keyword id="KW-0862">Zinc</keyword>
<keyword id="KW-0863">Zinc-finger</keyword>
<sequence length="478" mass="55359">MELLTFKDVAIEFSPEEWKCLDTSQQNLYRDVMLENYRNLVSLGVSISNPDLVTSLEQRKEPYNLKIHETAARPPAVCSHFTQNLWTVQGIEDSFHKLIPKGHEKRGHENLRKTCKSINECKVQKGGYNRINQCLLTTQKKTIQSNICVKVFHKFSNSNKDKIRYTGDKTFKCKECGKSFHVLSRLTQHKRIHTGENPYTCEECGKAFNWSSILTKHKRIHAREKFYKCEECGKGFTRSSHLTKHKRIHTGEKPYICEKCGKAFNQSSTLNLHKRIHSAQKYYKCEECGKAFKWSSSLNEHKRIHAGEKPFSCEECGNVFTTSSDFAKHKRIHTGEKPYKCEECGKSFNRSTTLTTHKRIHTGEKPYTCEECGKAFNWSSTLNVHKRIHSGKNPYKCEDCGKAFKVFANLHNHKKIHTGEKPYICKQCGKAFKQSSHLNKHKKIHTVDKPYKCKECGKAFKQYSNLPQHKRTHTGGKF</sequence>